<gene>
    <name evidence="1" type="primary">mymx</name>
</gene>
<keyword id="KW-1003">Cell membrane</keyword>
<keyword id="KW-0472">Membrane</keyword>
<keyword id="KW-0517">Myogenesis</keyword>
<keyword id="KW-1185">Reference proteome</keyword>
<keyword id="KW-0812">Transmembrane</keyword>
<keyword id="KW-1133">Transmembrane helix</keyword>
<accession>P0DP88</accession>
<comment type="function">
    <text evidence="1 3 4">Myoblast-specific protein that mediates myoblast fusion, an essential step for the formation of multi-nucleated muscle fibers (PubMed:28386024, PubMed:29078404). Involved in membrane fusion downstream of the lipid mixing step mediated by mymk. Acts by generating membrane stresses via its extracellular C-terminus, leading to drive fusion pore formation (By similarity).</text>
</comment>
<comment type="subcellular location">
    <subcellularLocation>
        <location evidence="4">Cell membrane</location>
        <topology evidence="1">Single-pass membrane protein</topology>
    </subcellularLocation>
</comment>
<comment type="tissue specificity">
    <text evidence="4">Specifically expressed in the developing myotome.</text>
</comment>
<comment type="developmental stage">
    <text evidence="4">Expression coincides with myogenesis: expression is initiated between 12 and 14 hours post-fertilization (hpf), peaks at 19.5 hpf, gradually decreases thereafter and disappears at 36 hpf (PubMed:29078404). Specifically expressed in the developing somites, concomitant with muscle differentiation (PubMed:29078404). Present in all developing myotomes in 14-hpf (10 somites), 18-hpf (18-19 somites), and 19.5-hpf (21 somites) embryos (PubMed:29078404). As somitogenesis proceeds along the anteroposterior axis, expression gradually disappears from the differentiated anterior somites and shifts to the more caudal somites (PubMed:29078404). Not expressed in craniofacial muscles and the paraxial mesoderm (PubMed:29078404).</text>
</comment>
<comment type="domain">
    <text evidence="4">The AxLyCxL motif is required for myoblast fusion.</text>
</comment>
<comment type="disruption phenotype">
    <text evidence="4">Abolished myoblast fusion.</text>
</comment>
<comment type="similarity">
    <text evidence="6">Belongs to the MYMX family.</text>
</comment>
<sequence>MPAVFLLLRSLVVRLFGSRLAASGVQLLRRILTTATGHLGTVLRNIWERISSQQSKEAILGCVLCLLNMHKKVDN</sequence>
<protein>
    <recommendedName>
        <fullName evidence="5">Protein myomixer</fullName>
    </recommendedName>
</protein>
<reference key="1">
    <citation type="journal article" date="2013" name="Nature">
        <title>The zebrafish reference genome sequence and its relationship to the human genome.</title>
        <authorList>
            <person name="Howe K."/>
            <person name="Clark M.D."/>
            <person name="Torroja C.F."/>
            <person name="Torrance J."/>
            <person name="Berthelot C."/>
            <person name="Muffato M."/>
            <person name="Collins J.E."/>
            <person name="Humphray S."/>
            <person name="McLaren K."/>
            <person name="Matthews L."/>
            <person name="McLaren S."/>
            <person name="Sealy I."/>
            <person name="Caccamo M."/>
            <person name="Churcher C."/>
            <person name="Scott C."/>
            <person name="Barrett J.C."/>
            <person name="Koch R."/>
            <person name="Rauch G.J."/>
            <person name="White S."/>
            <person name="Chow W."/>
            <person name="Kilian B."/>
            <person name="Quintais L.T."/>
            <person name="Guerra-Assuncao J.A."/>
            <person name="Zhou Y."/>
            <person name="Gu Y."/>
            <person name="Yen J."/>
            <person name="Vogel J.H."/>
            <person name="Eyre T."/>
            <person name="Redmond S."/>
            <person name="Banerjee R."/>
            <person name="Chi J."/>
            <person name="Fu B."/>
            <person name="Langley E."/>
            <person name="Maguire S.F."/>
            <person name="Laird G.K."/>
            <person name="Lloyd D."/>
            <person name="Kenyon E."/>
            <person name="Donaldson S."/>
            <person name="Sehra H."/>
            <person name="Almeida-King J."/>
            <person name="Loveland J."/>
            <person name="Trevanion S."/>
            <person name="Jones M."/>
            <person name="Quail M."/>
            <person name="Willey D."/>
            <person name="Hunt A."/>
            <person name="Burton J."/>
            <person name="Sims S."/>
            <person name="McLay K."/>
            <person name="Plumb B."/>
            <person name="Davis J."/>
            <person name="Clee C."/>
            <person name="Oliver K."/>
            <person name="Clark R."/>
            <person name="Riddle C."/>
            <person name="Elliot D."/>
            <person name="Threadgold G."/>
            <person name="Harden G."/>
            <person name="Ware D."/>
            <person name="Begum S."/>
            <person name="Mortimore B."/>
            <person name="Kerry G."/>
            <person name="Heath P."/>
            <person name="Phillimore B."/>
            <person name="Tracey A."/>
            <person name="Corby N."/>
            <person name="Dunn M."/>
            <person name="Johnson C."/>
            <person name="Wood J."/>
            <person name="Clark S."/>
            <person name="Pelan S."/>
            <person name="Griffiths G."/>
            <person name="Smith M."/>
            <person name="Glithero R."/>
            <person name="Howden P."/>
            <person name="Barker N."/>
            <person name="Lloyd C."/>
            <person name="Stevens C."/>
            <person name="Harley J."/>
            <person name="Holt K."/>
            <person name="Panagiotidis G."/>
            <person name="Lovell J."/>
            <person name="Beasley H."/>
            <person name="Henderson C."/>
            <person name="Gordon D."/>
            <person name="Auger K."/>
            <person name="Wright D."/>
            <person name="Collins J."/>
            <person name="Raisen C."/>
            <person name="Dyer L."/>
            <person name="Leung K."/>
            <person name="Robertson L."/>
            <person name="Ambridge K."/>
            <person name="Leongamornlert D."/>
            <person name="McGuire S."/>
            <person name="Gilderthorp R."/>
            <person name="Griffiths C."/>
            <person name="Manthravadi D."/>
            <person name="Nichol S."/>
            <person name="Barker G."/>
            <person name="Whitehead S."/>
            <person name="Kay M."/>
            <person name="Brown J."/>
            <person name="Murnane C."/>
            <person name="Gray E."/>
            <person name="Humphries M."/>
            <person name="Sycamore N."/>
            <person name="Barker D."/>
            <person name="Saunders D."/>
            <person name="Wallis J."/>
            <person name="Babbage A."/>
            <person name="Hammond S."/>
            <person name="Mashreghi-Mohammadi M."/>
            <person name="Barr L."/>
            <person name="Martin S."/>
            <person name="Wray P."/>
            <person name="Ellington A."/>
            <person name="Matthews N."/>
            <person name="Ellwood M."/>
            <person name="Woodmansey R."/>
            <person name="Clark G."/>
            <person name="Cooper J."/>
            <person name="Tromans A."/>
            <person name="Grafham D."/>
            <person name="Skuce C."/>
            <person name="Pandian R."/>
            <person name="Andrews R."/>
            <person name="Harrison E."/>
            <person name="Kimberley A."/>
            <person name="Garnett J."/>
            <person name="Fosker N."/>
            <person name="Hall R."/>
            <person name="Garner P."/>
            <person name="Kelly D."/>
            <person name="Bird C."/>
            <person name="Palmer S."/>
            <person name="Gehring I."/>
            <person name="Berger A."/>
            <person name="Dooley C.M."/>
            <person name="Ersan-Urun Z."/>
            <person name="Eser C."/>
            <person name="Geiger H."/>
            <person name="Geisler M."/>
            <person name="Karotki L."/>
            <person name="Kirn A."/>
            <person name="Konantz J."/>
            <person name="Konantz M."/>
            <person name="Oberlander M."/>
            <person name="Rudolph-Geiger S."/>
            <person name="Teucke M."/>
            <person name="Lanz C."/>
            <person name="Raddatz G."/>
            <person name="Osoegawa K."/>
            <person name="Zhu B."/>
            <person name="Rapp A."/>
            <person name="Widaa S."/>
            <person name="Langford C."/>
            <person name="Yang F."/>
            <person name="Schuster S.C."/>
            <person name="Carter N.P."/>
            <person name="Harrow J."/>
            <person name="Ning Z."/>
            <person name="Herrero J."/>
            <person name="Searle S.M."/>
            <person name="Enright A."/>
            <person name="Geisler R."/>
            <person name="Plasterk R.H."/>
            <person name="Lee C."/>
            <person name="Westerfield M."/>
            <person name="de Jong P.J."/>
            <person name="Zon L.I."/>
            <person name="Postlethwait J.H."/>
            <person name="Nusslein-Volhard C."/>
            <person name="Hubbard T.J."/>
            <person name="Roest Crollius H."/>
            <person name="Rogers J."/>
            <person name="Stemple D.L."/>
        </authorList>
    </citation>
    <scope>NUCLEOTIDE SEQUENCE [LARGE SCALE GENOMIC DNA]</scope>
    <source>
        <strain>Tuebingen</strain>
    </source>
</reference>
<reference key="2">
    <citation type="journal article" date="2017" name="Science">
        <title>Control of muscle formation by the fusogenic micropeptide myomixer.</title>
        <authorList>
            <person name="Bi P."/>
            <person name="Ramirez-Martinez A."/>
            <person name="Li H."/>
            <person name="Cannavino J."/>
            <person name="McAnally J.R."/>
            <person name="Shelton J.M."/>
            <person name="Sanchez-Ortiz E."/>
            <person name="Bassel-Duby R."/>
            <person name="Olson E.N."/>
        </authorList>
    </citation>
    <scope>FUNCTION</scope>
</reference>
<reference key="3">
    <citation type="journal article" date="2017" name="Proc. Natl. Acad. Sci. U.S.A.">
        <title>Requirement of the fusogenic micropeptide myomixer for muscle formation in zebrafish.</title>
        <authorList>
            <person name="Shi J."/>
            <person name="Bi P."/>
            <person name="Pei J."/>
            <person name="Li H."/>
            <person name="Grishin N.V."/>
            <person name="Bassel-Duby R."/>
            <person name="Chen E.H."/>
            <person name="Olson E.N."/>
        </authorList>
    </citation>
    <scope>FUNCTION</scope>
    <scope>SUBCELLULAR LOCATION</scope>
    <scope>TISSUE SPECIFICITY</scope>
    <scope>DEVELOPMENTAL STAGE</scope>
    <scope>DOMAIN</scope>
    <scope>DISRUPTION PHENOTYPE</scope>
    <scope>MUTAGENESIS OF 58-ALA--LEU-67 AND 62-CYS--CYS-65</scope>
</reference>
<feature type="chain" id="PRO_0000441743" description="Protein myomixer">
    <location>
        <begin position="1"/>
        <end position="75"/>
    </location>
</feature>
<feature type="topological domain" description="Cytoplasmic" evidence="1">
    <location>
        <begin position="1"/>
        <end position="5"/>
    </location>
</feature>
<feature type="transmembrane region" description="Helical" evidence="2">
    <location>
        <begin position="6"/>
        <end position="28"/>
    </location>
</feature>
<feature type="topological domain" description="Extracellular" evidence="1">
    <location>
        <begin position="29"/>
        <end position="75"/>
    </location>
</feature>
<feature type="short sequence motif" description="AxLyCxL" evidence="4">
    <location>
        <begin position="58"/>
        <end position="67"/>
    </location>
</feature>
<feature type="mutagenesis site" description="Abolished ability to mediate myoblast fusion." evidence="4">
    <location>
        <begin position="58"/>
        <end position="67"/>
    </location>
</feature>
<feature type="mutagenesis site" description="Decreased but not abolished ability to mediate myoblast fusion." evidence="4">
    <original>CVLC</original>
    <variation>AVLA</variation>
    <location>
        <begin position="62"/>
        <end position="65"/>
    </location>
</feature>
<dbReference type="EMBL" id="CU929120">
    <property type="status" value="NOT_ANNOTATED_CDS"/>
    <property type="molecule type" value="Genomic_DNA"/>
</dbReference>
<dbReference type="SMR" id="P0DP88"/>
<dbReference type="InParanoid" id="P0DP88"/>
<dbReference type="Proteomes" id="UP000000437">
    <property type="component" value="Unplaced"/>
</dbReference>
<dbReference type="GO" id="GO:0005886">
    <property type="term" value="C:plasma membrane"/>
    <property type="evidence" value="ECO:0000314"/>
    <property type="project" value="UniProtKB"/>
</dbReference>
<dbReference type="GO" id="GO:0007520">
    <property type="term" value="P:myoblast fusion"/>
    <property type="evidence" value="ECO:0000314"/>
    <property type="project" value="UniProtKB"/>
</dbReference>
<dbReference type="GO" id="GO:0014905">
    <property type="term" value="P:myoblast fusion involved in skeletal muscle regeneration"/>
    <property type="evidence" value="ECO:0000250"/>
    <property type="project" value="UniProtKB"/>
</dbReference>
<dbReference type="GO" id="GO:0045026">
    <property type="term" value="P:plasma membrane fusion"/>
    <property type="evidence" value="ECO:0000315"/>
    <property type="project" value="UniProtKB"/>
</dbReference>
<dbReference type="GO" id="GO:0060538">
    <property type="term" value="P:skeletal muscle organ development"/>
    <property type="evidence" value="ECO:0000250"/>
    <property type="project" value="UniProtKB"/>
</dbReference>
<dbReference type="GO" id="GO:0043403">
    <property type="term" value="P:skeletal muscle tissue regeneration"/>
    <property type="evidence" value="ECO:0000250"/>
    <property type="project" value="UniProtKB"/>
</dbReference>
<dbReference type="CDD" id="cd20278">
    <property type="entry name" value="Minion"/>
    <property type="match status" value="1"/>
</dbReference>
<dbReference type="InterPro" id="IPR039014">
    <property type="entry name" value="Myomixer"/>
</dbReference>
<dbReference type="Pfam" id="PF21950">
    <property type="entry name" value="MINION"/>
    <property type="match status" value="1"/>
</dbReference>
<name>MYMX_DANRE</name>
<organism>
    <name type="scientific">Danio rerio</name>
    <name type="common">Zebrafish</name>
    <name type="synonym">Brachydanio rerio</name>
    <dbReference type="NCBI Taxonomy" id="7955"/>
    <lineage>
        <taxon>Eukaryota</taxon>
        <taxon>Metazoa</taxon>
        <taxon>Chordata</taxon>
        <taxon>Craniata</taxon>
        <taxon>Vertebrata</taxon>
        <taxon>Euteleostomi</taxon>
        <taxon>Actinopterygii</taxon>
        <taxon>Neopterygii</taxon>
        <taxon>Teleostei</taxon>
        <taxon>Ostariophysi</taxon>
        <taxon>Cypriniformes</taxon>
        <taxon>Danionidae</taxon>
        <taxon>Danioninae</taxon>
        <taxon>Danio</taxon>
    </lineage>
</organism>
<evidence type="ECO:0000250" key="1">
    <source>
        <dbReference type="UniProtKB" id="Q2Q5T5"/>
    </source>
</evidence>
<evidence type="ECO:0000255" key="2"/>
<evidence type="ECO:0000269" key="3">
    <source>
    </source>
</evidence>
<evidence type="ECO:0000269" key="4">
    <source>
    </source>
</evidence>
<evidence type="ECO:0000303" key="5">
    <source>
    </source>
</evidence>
<evidence type="ECO:0000305" key="6"/>
<proteinExistence type="evidence at protein level"/>